<comment type="function">
    <text evidence="1">One of the primary rRNA binding proteins. Required for association of the 30S and 50S subunits to form the 70S ribosome, for tRNA binding and peptide bond formation. It has been suggested to have peptidyltransferase activity; this is somewhat controversial. Makes several contacts with the 16S rRNA in the 70S ribosome.</text>
</comment>
<comment type="subunit">
    <text evidence="1">Part of the 50S ribosomal subunit. Forms a bridge to the 30S subunit in the 70S ribosome.</text>
</comment>
<comment type="similarity">
    <text evidence="1">Belongs to the universal ribosomal protein uL2 family.</text>
</comment>
<accession>B1MGE7</accession>
<name>RL2_MYCA9</name>
<keyword id="KW-1185">Reference proteome</keyword>
<keyword id="KW-0687">Ribonucleoprotein</keyword>
<keyword id="KW-0689">Ribosomal protein</keyword>
<keyword id="KW-0694">RNA-binding</keyword>
<keyword id="KW-0699">rRNA-binding</keyword>
<sequence>MAIRKYKPTTPGRRGSSVADFSEITRSTPEKSLIRPLHGTGGRNAHGRITTRHKGGGHKRAYRLIDFRRHDKDGVNAKVAHIEYDPNRTARIALLHFLDGEKRYIIAPVGLSQGDVVESGANADIKPGNNLPLRNIPTGTTVHAVELRPGGGAKLARSAGSGIQLLGKEGAYASLRMPSGEIRRVDVRCRATVGEVGNAEQANINWGKAGRMRWKGKRPTVRGVVMNPVDHPHGGGEGKTSGGRHPVSPWGKPEGRTRKPNKASDKLIVRRRRTGKKR</sequence>
<gene>
    <name evidence="1" type="primary">rplB</name>
    <name type="ordered locus">MAB_3817c</name>
</gene>
<protein>
    <recommendedName>
        <fullName evidence="1">Large ribosomal subunit protein uL2</fullName>
    </recommendedName>
    <alternativeName>
        <fullName evidence="3">50S ribosomal protein L2</fullName>
    </alternativeName>
</protein>
<reference key="1">
    <citation type="journal article" date="2009" name="PLoS ONE">
        <title>Non mycobacterial virulence genes in the genome of the emerging pathogen Mycobacterium abscessus.</title>
        <authorList>
            <person name="Ripoll F."/>
            <person name="Pasek S."/>
            <person name="Schenowitz C."/>
            <person name="Dossat C."/>
            <person name="Barbe V."/>
            <person name="Rottman M."/>
            <person name="Macheras E."/>
            <person name="Heym B."/>
            <person name="Herrmann J.L."/>
            <person name="Daffe M."/>
            <person name="Brosch R."/>
            <person name="Risler J.L."/>
            <person name="Gaillard J.L."/>
        </authorList>
    </citation>
    <scope>NUCLEOTIDE SEQUENCE [LARGE SCALE GENOMIC DNA]</scope>
    <source>
        <strain>ATCC 19977 / DSM 44196 / CCUG 20993 / CIP 104536 / JCM 13569 / NCTC 13031 / TMC 1543 / L948</strain>
    </source>
</reference>
<proteinExistence type="inferred from homology"/>
<feature type="chain" id="PRO_1000141583" description="Large ribosomal subunit protein uL2">
    <location>
        <begin position="1"/>
        <end position="278"/>
    </location>
</feature>
<feature type="region of interest" description="Disordered" evidence="2">
    <location>
        <begin position="33"/>
        <end position="57"/>
    </location>
</feature>
<feature type="region of interest" description="Disordered" evidence="2">
    <location>
        <begin position="224"/>
        <end position="278"/>
    </location>
</feature>
<feature type="compositionally biased region" description="Basic residues" evidence="2">
    <location>
        <begin position="45"/>
        <end position="57"/>
    </location>
</feature>
<feature type="compositionally biased region" description="Basic and acidic residues" evidence="2">
    <location>
        <begin position="253"/>
        <end position="268"/>
    </location>
</feature>
<feature type="compositionally biased region" description="Basic residues" evidence="2">
    <location>
        <begin position="269"/>
        <end position="278"/>
    </location>
</feature>
<dbReference type="EMBL" id="CU458896">
    <property type="protein sequence ID" value="CAM63892.1"/>
    <property type="molecule type" value="Genomic_DNA"/>
</dbReference>
<dbReference type="RefSeq" id="WP_005055646.1">
    <property type="nucleotide sequence ID" value="NZ_MLCG01000001.1"/>
</dbReference>
<dbReference type="SMR" id="B1MGE7"/>
<dbReference type="GeneID" id="93380756"/>
<dbReference type="KEGG" id="mab:MAB_3817c"/>
<dbReference type="Proteomes" id="UP000007137">
    <property type="component" value="Chromosome"/>
</dbReference>
<dbReference type="GO" id="GO:0015934">
    <property type="term" value="C:large ribosomal subunit"/>
    <property type="evidence" value="ECO:0007669"/>
    <property type="project" value="InterPro"/>
</dbReference>
<dbReference type="GO" id="GO:0019843">
    <property type="term" value="F:rRNA binding"/>
    <property type="evidence" value="ECO:0007669"/>
    <property type="project" value="UniProtKB-UniRule"/>
</dbReference>
<dbReference type="GO" id="GO:0003735">
    <property type="term" value="F:structural constituent of ribosome"/>
    <property type="evidence" value="ECO:0007669"/>
    <property type="project" value="InterPro"/>
</dbReference>
<dbReference type="GO" id="GO:0016740">
    <property type="term" value="F:transferase activity"/>
    <property type="evidence" value="ECO:0007669"/>
    <property type="project" value="InterPro"/>
</dbReference>
<dbReference type="GO" id="GO:0002181">
    <property type="term" value="P:cytoplasmic translation"/>
    <property type="evidence" value="ECO:0007669"/>
    <property type="project" value="TreeGrafter"/>
</dbReference>
<dbReference type="FunFam" id="2.30.30.30:FF:000001">
    <property type="entry name" value="50S ribosomal protein L2"/>
    <property type="match status" value="1"/>
</dbReference>
<dbReference type="FunFam" id="2.40.50.140:FF:000003">
    <property type="entry name" value="50S ribosomal protein L2"/>
    <property type="match status" value="1"/>
</dbReference>
<dbReference type="FunFam" id="4.10.950.10:FF:000001">
    <property type="entry name" value="50S ribosomal protein L2"/>
    <property type="match status" value="1"/>
</dbReference>
<dbReference type="Gene3D" id="2.30.30.30">
    <property type="match status" value="1"/>
</dbReference>
<dbReference type="Gene3D" id="2.40.50.140">
    <property type="entry name" value="Nucleic acid-binding proteins"/>
    <property type="match status" value="1"/>
</dbReference>
<dbReference type="Gene3D" id="4.10.950.10">
    <property type="entry name" value="Ribosomal protein L2, domain 3"/>
    <property type="match status" value="1"/>
</dbReference>
<dbReference type="HAMAP" id="MF_01320_B">
    <property type="entry name" value="Ribosomal_uL2_B"/>
    <property type="match status" value="1"/>
</dbReference>
<dbReference type="InterPro" id="IPR012340">
    <property type="entry name" value="NA-bd_OB-fold"/>
</dbReference>
<dbReference type="InterPro" id="IPR014722">
    <property type="entry name" value="Rib_uL2_dom2"/>
</dbReference>
<dbReference type="InterPro" id="IPR002171">
    <property type="entry name" value="Ribosomal_uL2"/>
</dbReference>
<dbReference type="InterPro" id="IPR005880">
    <property type="entry name" value="Ribosomal_uL2_bac/org-type"/>
</dbReference>
<dbReference type="InterPro" id="IPR022669">
    <property type="entry name" value="Ribosomal_uL2_C"/>
</dbReference>
<dbReference type="InterPro" id="IPR022671">
    <property type="entry name" value="Ribosomal_uL2_CS"/>
</dbReference>
<dbReference type="InterPro" id="IPR014726">
    <property type="entry name" value="Ribosomal_uL2_dom3"/>
</dbReference>
<dbReference type="InterPro" id="IPR022666">
    <property type="entry name" value="Ribosomal_uL2_RNA-bd_dom"/>
</dbReference>
<dbReference type="InterPro" id="IPR008991">
    <property type="entry name" value="Translation_prot_SH3-like_sf"/>
</dbReference>
<dbReference type="NCBIfam" id="TIGR01171">
    <property type="entry name" value="rplB_bact"/>
    <property type="match status" value="1"/>
</dbReference>
<dbReference type="PANTHER" id="PTHR13691:SF5">
    <property type="entry name" value="LARGE RIBOSOMAL SUBUNIT PROTEIN UL2M"/>
    <property type="match status" value="1"/>
</dbReference>
<dbReference type="PANTHER" id="PTHR13691">
    <property type="entry name" value="RIBOSOMAL PROTEIN L2"/>
    <property type="match status" value="1"/>
</dbReference>
<dbReference type="Pfam" id="PF00181">
    <property type="entry name" value="Ribosomal_L2"/>
    <property type="match status" value="1"/>
</dbReference>
<dbReference type="Pfam" id="PF03947">
    <property type="entry name" value="Ribosomal_L2_C"/>
    <property type="match status" value="1"/>
</dbReference>
<dbReference type="PIRSF" id="PIRSF002158">
    <property type="entry name" value="Ribosomal_L2"/>
    <property type="match status" value="1"/>
</dbReference>
<dbReference type="SMART" id="SM01383">
    <property type="entry name" value="Ribosomal_L2"/>
    <property type="match status" value="1"/>
</dbReference>
<dbReference type="SMART" id="SM01382">
    <property type="entry name" value="Ribosomal_L2_C"/>
    <property type="match status" value="1"/>
</dbReference>
<dbReference type="SUPFAM" id="SSF50249">
    <property type="entry name" value="Nucleic acid-binding proteins"/>
    <property type="match status" value="1"/>
</dbReference>
<dbReference type="SUPFAM" id="SSF50104">
    <property type="entry name" value="Translation proteins SH3-like domain"/>
    <property type="match status" value="1"/>
</dbReference>
<dbReference type="PROSITE" id="PS00467">
    <property type="entry name" value="RIBOSOMAL_L2"/>
    <property type="match status" value="1"/>
</dbReference>
<organism>
    <name type="scientific">Mycobacteroides abscessus (strain ATCC 19977 / DSM 44196 / CCUG 20993 / CIP 104536 / JCM 13569 / NCTC 13031 / TMC 1543 / L948)</name>
    <name type="common">Mycobacterium abscessus</name>
    <dbReference type="NCBI Taxonomy" id="561007"/>
    <lineage>
        <taxon>Bacteria</taxon>
        <taxon>Bacillati</taxon>
        <taxon>Actinomycetota</taxon>
        <taxon>Actinomycetes</taxon>
        <taxon>Mycobacteriales</taxon>
        <taxon>Mycobacteriaceae</taxon>
        <taxon>Mycobacteroides</taxon>
        <taxon>Mycobacteroides abscessus</taxon>
    </lineage>
</organism>
<evidence type="ECO:0000255" key="1">
    <source>
        <dbReference type="HAMAP-Rule" id="MF_01320"/>
    </source>
</evidence>
<evidence type="ECO:0000256" key="2">
    <source>
        <dbReference type="SAM" id="MobiDB-lite"/>
    </source>
</evidence>
<evidence type="ECO:0000305" key="3"/>